<accession>Q3J5W4</accession>
<evidence type="ECO:0000255" key="1">
    <source>
        <dbReference type="HAMAP-Rule" id="MF_00279"/>
    </source>
</evidence>
<protein>
    <recommendedName>
        <fullName evidence="1">Pyridoxine 5'-phosphate synthase</fullName>
        <shortName evidence="1">PNP synthase</shortName>
        <ecNumber evidence="1">2.6.99.2</ecNumber>
    </recommendedName>
</protein>
<name>PDXJ_CERS4</name>
<sequence>MKPLGRLRLGVNIDHVATVRNARGTSYPDPLRAGLLAEAAGADGITAHLREDRRHIRDEDITALMQGLRVPLNLEMATTPEMQAIALRHKPHAVCLVPERREERTTEGGIDVAGDIGRLKDFVAPLRAAGCRVSMFIGHDVRQIEASAEIGAAVVELHTGHYCDLVAEGRTAEAARELEALREGAALAHSLGLEVHAGHGISYDTVAEIAAFPQVMELNIGHFLIGEAIFRGLGSAIEGMRRRMDAAREAAA</sequence>
<comment type="function">
    <text evidence="1">Catalyzes the complicated ring closure reaction between the two acyclic compounds 1-deoxy-D-xylulose-5-phosphate (DXP) and 3-amino-2-oxopropyl phosphate (1-amino-acetone-3-phosphate or AAP) to form pyridoxine 5'-phosphate (PNP) and inorganic phosphate.</text>
</comment>
<comment type="catalytic activity">
    <reaction evidence="1">
        <text>3-amino-2-oxopropyl phosphate + 1-deoxy-D-xylulose 5-phosphate = pyridoxine 5'-phosphate + phosphate + 2 H2O + H(+)</text>
        <dbReference type="Rhea" id="RHEA:15265"/>
        <dbReference type="ChEBI" id="CHEBI:15377"/>
        <dbReference type="ChEBI" id="CHEBI:15378"/>
        <dbReference type="ChEBI" id="CHEBI:43474"/>
        <dbReference type="ChEBI" id="CHEBI:57279"/>
        <dbReference type="ChEBI" id="CHEBI:57792"/>
        <dbReference type="ChEBI" id="CHEBI:58589"/>
        <dbReference type="EC" id="2.6.99.2"/>
    </reaction>
</comment>
<comment type="pathway">
    <text evidence="1">Cofactor biosynthesis; pyridoxine 5'-phosphate biosynthesis; pyridoxine 5'-phosphate from D-erythrose 4-phosphate: step 5/5.</text>
</comment>
<comment type="subunit">
    <text evidence="1">Homooctamer; tetramer of dimers.</text>
</comment>
<comment type="subcellular location">
    <subcellularLocation>
        <location evidence="1">Cytoplasm</location>
    </subcellularLocation>
</comment>
<comment type="similarity">
    <text evidence="1">Belongs to the PNP synthase family.</text>
</comment>
<gene>
    <name evidence="1" type="primary">pdxJ</name>
    <name type="ordered locus">RHOS4_02520</name>
    <name type="ORF">RSP_1672</name>
</gene>
<dbReference type="EC" id="2.6.99.2" evidence="1"/>
<dbReference type="EMBL" id="CP000143">
    <property type="protein sequence ID" value="ABA77820.1"/>
    <property type="molecule type" value="Genomic_DNA"/>
</dbReference>
<dbReference type="RefSeq" id="WP_002722415.1">
    <property type="nucleotide sequence ID" value="NZ_CP030271.1"/>
</dbReference>
<dbReference type="RefSeq" id="YP_351721.1">
    <property type="nucleotide sequence ID" value="NC_007493.2"/>
</dbReference>
<dbReference type="SMR" id="Q3J5W4"/>
<dbReference type="STRING" id="272943.RSP_1672"/>
<dbReference type="EnsemblBacteria" id="ABA77820">
    <property type="protein sequence ID" value="ABA77820"/>
    <property type="gene ID" value="RSP_1672"/>
</dbReference>
<dbReference type="KEGG" id="rsp:RSP_1672"/>
<dbReference type="PATRIC" id="fig|272943.9.peg.549"/>
<dbReference type="eggNOG" id="COG0854">
    <property type="taxonomic scope" value="Bacteria"/>
</dbReference>
<dbReference type="OrthoDB" id="9806590at2"/>
<dbReference type="PhylomeDB" id="Q3J5W4"/>
<dbReference type="UniPathway" id="UPA00244">
    <property type="reaction ID" value="UER00313"/>
</dbReference>
<dbReference type="Proteomes" id="UP000002703">
    <property type="component" value="Chromosome 1"/>
</dbReference>
<dbReference type="GO" id="GO:0005829">
    <property type="term" value="C:cytosol"/>
    <property type="evidence" value="ECO:0007669"/>
    <property type="project" value="TreeGrafter"/>
</dbReference>
<dbReference type="GO" id="GO:0033856">
    <property type="term" value="F:pyridoxine 5'-phosphate synthase activity"/>
    <property type="evidence" value="ECO:0007669"/>
    <property type="project" value="UniProtKB-EC"/>
</dbReference>
<dbReference type="GO" id="GO:0008615">
    <property type="term" value="P:pyridoxine biosynthetic process"/>
    <property type="evidence" value="ECO:0007669"/>
    <property type="project" value="UniProtKB-UniRule"/>
</dbReference>
<dbReference type="CDD" id="cd00003">
    <property type="entry name" value="PNPsynthase"/>
    <property type="match status" value="1"/>
</dbReference>
<dbReference type="Gene3D" id="3.20.20.70">
    <property type="entry name" value="Aldolase class I"/>
    <property type="match status" value="1"/>
</dbReference>
<dbReference type="HAMAP" id="MF_00279">
    <property type="entry name" value="PdxJ"/>
    <property type="match status" value="1"/>
</dbReference>
<dbReference type="InterPro" id="IPR013785">
    <property type="entry name" value="Aldolase_TIM"/>
</dbReference>
<dbReference type="InterPro" id="IPR004569">
    <property type="entry name" value="PyrdxlP_synth_PdxJ"/>
</dbReference>
<dbReference type="InterPro" id="IPR036130">
    <property type="entry name" value="Pyridoxine-5'_phos_synth"/>
</dbReference>
<dbReference type="NCBIfam" id="TIGR00559">
    <property type="entry name" value="pdxJ"/>
    <property type="match status" value="1"/>
</dbReference>
<dbReference type="NCBIfam" id="NF003624">
    <property type="entry name" value="PRK05265.1-2"/>
    <property type="match status" value="1"/>
</dbReference>
<dbReference type="NCBIfam" id="NF003625">
    <property type="entry name" value="PRK05265.1-3"/>
    <property type="match status" value="1"/>
</dbReference>
<dbReference type="NCBIfam" id="NF003627">
    <property type="entry name" value="PRK05265.1-5"/>
    <property type="match status" value="1"/>
</dbReference>
<dbReference type="PANTHER" id="PTHR30456">
    <property type="entry name" value="PYRIDOXINE 5'-PHOSPHATE SYNTHASE"/>
    <property type="match status" value="1"/>
</dbReference>
<dbReference type="PANTHER" id="PTHR30456:SF0">
    <property type="entry name" value="PYRIDOXINE 5'-PHOSPHATE SYNTHASE"/>
    <property type="match status" value="1"/>
</dbReference>
<dbReference type="Pfam" id="PF03740">
    <property type="entry name" value="PdxJ"/>
    <property type="match status" value="1"/>
</dbReference>
<dbReference type="SUPFAM" id="SSF63892">
    <property type="entry name" value="Pyridoxine 5'-phosphate synthase"/>
    <property type="match status" value="1"/>
</dbReference>
<reference key="1">
    <citation type="submission" date="2005-09" db="EMBL/GenBank/DDBJ databases">
        <title>Complete sequence of chromosome 1 of Rhodobacter sphaeroides 2.4.1.</title>
        <authorList>
            <person name="Copeland A."/>
            <person name="Lucas S."/>
            <person name="Lapidus A."/>
            <person name="Barry K."/>
            <person name="Detter J.C."/>
            <person name="Glavina T."/>
            <person name="Hammon N."/>
            <person name="Israni S."/>
            <person name="Pitluck S."/>
            <person name="Richardson P."/>
            <person name="Mackenzie C."/>
            <person name="Choudhary M."/>
            <person name="Larimer F."/>
            <person name="Hauser L.J."/>
            <person name="Land M."/>
            <person name="Donohue T.J."/>
            <person name="Kaplan S."/>
        </authorList>
    </citation>
    <scope>NUCLEOTIDE SEQUENCE [LARGE SCALE GENOMIC DNA]</scope>
    <source>
        <strain>ATCC 17023 / DSM 158 / JCM 6121 / CCUG 31486 / LMG 2827 / NBRC 12203 / NCIMB 8253 / ATH 2.4.1.</strain>
    </source>
</reference>
<organism>
    <name type="scientific">Cereibacter sphaeroides (strain ATCC 17023 / DSM 158 / JCM 6121 / CCUG 31486 / LMG 2827 / NBRC 12203 / NCIMB 8253 / ATH 2.4.1.)</name>
    <name type="common">Rhodobacter sphaeroides</name>
    <dbReference type="NCBI Taxonomy" id="272943"/>
    <lineage>
        <taxon>Bacteria</taxon>
        <taxon>Pseudomonadati</taxon>
        <taxon>Pseudomonadota</taxon>
        <taxon>Alphaproteobacteria</taxon>
        <taxon>Rhodobacterales</taxon>
        <taxon>Paracoccaceae</taxon>
        <taxon>Cereibacter</taxon>
    </lineage>
</organism>
<feature type="chain" id="PRO_0000231840" description="Pyridoxine 5'-phosphate synthase">
    <location>
        <begin position="1"/>
        <end position="252"/>
    </location>
</feature>
<feature type="active site" description="Proton acceptor" evidence="1">
    <location>
        <position position="48"/>
    </location>
</feature>
<feature type="active site" description="Proton acceptor" evidence="1">
    <location>
        <position position="75"/>
    </location>
</feature>
<feature type="active site" description="Proton donor" evidence="1">
    <location>
        <position position="199"/>
    </location>
</feature>
<feature type="binding site" evidence="1">
    <location>
        <position position="12"/>
    </location>
    <ligand>
        <name>3-amino-2-oxopropyl phosphate</name>
        <dbReference type="ChEBI" id="CHEBI:57279"/>
    </ligand>
</feature>
<feature type="binding site" evidence="1">
    <location>
        <begin position="14"/>
        <end position="15"/>
    </location>
    <ligand>
        <name>1-deoxy-D-xylulose 5-phosphate</name>
        <dbReference type="ChEBI" id="CHEBI:57792"/>
    </ligand>
</feature>
<feature type="binding site" evidence="1">
    <location>
        <position position="23"/>
    </location>
    <ligand>
        <name>3-amino-2-oxopropyl phosphate</name>
        <dbReference type="ChEBI" id="CHEBI:57279"/>
    </ligand>
</feature>
<feature type="binding site" evidence="1">
    <location>
        <position position="50"/>
    </location>
    <ligand>
        <name>1-deoxy-D-xylulose 5-phosphate</name>
        <dbReference type="ChEBI" id="CHEBI:57792"/>
    </ligand>
</feature>
<feature type="binding site" evidence="1">
    <location>
        <position position="55"/>
    </location>
    <ligand>
        <name>1-deoxy-D-xylulose 5-phosphate</name>
        <dbReference type="ChEBI" id="CHEBI:57792"/>
    </ligand>
</feature>
<feature type="binding site" evidence="1">
    <location>
        <position position="105"/>
    </location>
    <ligand>
        <name>1-deoxy-D-xylulose 5-phosphate</name>
        <dbReference type="ChEBI" id="CHEBI:57792"/>
    </ligand>
</feature>
<feature type="binding site" evidence="1">
    <location>
        <position position="200"/>
    </location>
    <ligand>
        <name>3-amino-2-oxopropyl phosphate</name>
        <dbReference type="ChEBI" id="CHEBI:57279"/>
    </ligand>
</feature>
<feature type="binding site" evidence="1">
    <location>
        <begin position="221"/>
        <end position="222"/>
    </location>
    <ligand>
        <name>3-amino-2-oxopropyl phosphate</name>
        <dbReference type="ChEBI" id="CHEBI:57279"/>
    </ligand>
</feature>
<feature type="site" description="Transition state stabilizer" evidence="1">
    <location>
        <position position="156"/>
    </location>
</feature>
<keyword id="KW-0963">Cytoplasm</keyword>
<keyword id="KW-0664">Pyridoxine biosynthesis</keyword>
<keyword id="KW-1185">Reference proteome</keyword>
<keyword id="KW-0808">Transferase</keyword>
<proteinExistence type="inferred from homology"/>